<protein>
    <recommendedName>
        <fullName>UPF0758 protein Oant_1909</fullName>
    </recommendedName>
</protein>
<reference key="1">
    <citation type="journal article" date="2011" name="J. Bacteriol.">
        <title>Genome of Ochrobactrum anthropi ATCC 49188 T, a versatile opportunistic pathogen and symbiont of several eukaryotic hosts.</title>
        <authorList>
            <person name="Chain P.S."/>
            <person name="Lang D.M."/>
            <person name="Comerci D.J."/>
            <person name="Malfatti S.A."/>
            <person name="Vergez L.M."/>
            <person name="Shin M."/>
            <person name="Ugalde R.A."/>
            <person name="Garcia E."/>
            <person name="Tolmasky M.E."/>
        </authorList>
    </citation>
    <scope>NUCLEOTIDE SEQUENCE [LARGE SCALE GENOMIC DNA]</scope>
    <source>
        <strain>ATCC 49188 / DSM 6882 / CCUG 24695 / JCM 21032 / LMG 3331 / NBRC 15819 / NCTC 12168 / Alc 37</strain>
    </source>
</reference>
<organism>
    <name type="scientific">Brucella anthropi (strain ATCC 49188 / DSM 6882 / CCUG 24695 / JCM 21032 / LMG 3331 / NBRC 15819 / NCTC 12168 / Alc 37)</name>
    <name type="common">Ochrobactrum anthropi</name>
    <dbReference type="NCBI Taxonomy" id="439375"/>
    <lineage>
        <taxon>Bacteria</taxon>
        <taxon>Pseudomonadati</taxon>
        <taxon>Pseudomonadota</taxon>
        <taxon>Alphaproteobacteria</taxon>
        <taxon>Hyphomicrobiales</taxon>
        <taxon>Brucellaceae</taxon>
        <taxon>Brucella/Ochrobactrum group</taxon>
        <taxon>Brucella</taxon>
    </lineage>
</organism>
<feature type="chain" id="PRO_1000089828" description="UPF0758 protein Oant_1909">
    <location>
        <begin position="1"/>
        <end position="249"/>
    </location>
</feature>
<feature type="domain" description="MPN" evidence="1">
    <location>
        <begin position="127"/>
        <end position="249"/>
    </location>
</feature>
<feature type="short sequence motif" description="JAMM motif" evidence="1">
    <location>
        <begin position="198"/>
        <end position="211"/>
    </location>
</feature>
<feature type="binding site" evidence="1">
    <location>
        <position position="198"/>
    </location>
    <ligand>
        <name>Zn(2+)</name>
        <dbReference type="ChEBI" id="CHEBI:29105"/>
        <note>catalytic</note>
    </ligand>
</feature>
<feature type="binding site" evidence="1">
    <location>
        <position position="200"/>
    </location>
    <ligand>
        <name>Zn(2+)</name>
        <dbReference type="ChEBI" id="CHEBI:29105"/>
        <note>catalytic</note>
    </ligand>
</feature>
<feature type="binding site" evidence="1">
    <location>
        <position position="211"/>
    </location>
    <ligand>
        <name>Zn(2+)</name>
        <dbReference type="ChEBI" id="CHEBI:29105"/>
        <note>catalytic</note>
    </ligand>
</feature>
<comment type="similarity">
    <text evidence="2">Belongs to the UPF0758 family.</text>
</comment>
<dbReference type="EMBL" id="CP000758">
    <property type="protein sequence ID" value="ABS14625.1"/>
    <property type="molecule type" value="Genomic_DNA"/>
</dbReference>
<dbReference type="RefSeq" id="WP_012091887.1">
    <property type="nucleotide sequence ID" value="NC_009667.1"/>
</dbReference>
<dbReference type="SMR" id="A6X071"/>
<dbReference type="STRING" id="439375.Oant_1909"/>
<dbReference type="KEGG" id="oan:Oant_1909"/>
<dbReference type="PATRIC" id="fig|439375.7.peg.2009"/>
<dbReference type="eggNOG" id="COG2003">
    <property type="taxonomic scope" value="Bacteria"/>
</dbReference>
<dbReference type="HOGENOM" id="CLU_073529_0_0_5"/>
<dbReference type="PhylomeDB" id="A6X071"/>
<dbReference type="Proteomes" id="UP000002301">
    <property type="component" value="Chromosome 1"/>
</dbReference>
<dbReference type="GO" id="GO:0046872">
    <property type="term" value="F:metal ion binding"/>
    <property type="evidence" value="ECO:0007669"/>
    <property type="project" value="UniProtKB-KW"/>
</dbReference>
<dbReference type="GO" id="GO:0008237">
    <property type="term" value="F:metallopeptidase activity"/>
    <property type="evidence" value="ECO:0007669"/>
    <property type="project" value="UniProtKB-KW"/>
</dbReference>
<dbReference type="GO" id="GO:0006508">
    <property type="term" value="P:proteolysis"/>
    <property type="evidence" value="ECO:0007669"/>
    <property type="project" value="UniProtKB-KW"/>
</dbReference>
<dbReference type="CDD" id="cd08071">
    <property type="entry name" value="MPN_DUF2466"/>
    <property type="match status" value="1"/>
</dbReference>
<dbReference type="Gene3D" id="1.10.150.20">
    <property type="entry name" value="5' to 3' exonuclease, C-terminal subdomain"/>
    <property type="match status" value="1"/>
</dbReference>
<dbReference type="Gene3D" id="3.40.140.10">
    <property type="entry name" value="Cytidine Deaminase, domain 2"/>
    <property type="match status" value="1"/>
</dbReference>
<dbReference type="InterPro" id="IPR037518">
    <property type="entry name" value="MPN"/>
</dbReference>
<dbReference type="InterPro" id="IPR025657">
    <property type="entry name" value="RadC_JAB"/>
</dbReference>
<dbReference type="InterPro" id="IPR010994">
    <property type="entry name" value="RuvA_2-like"/>
</dbReference>
<dbReference type="InterPro" id="IPR001405">
    <property type="entry name" value="UPF0758"/>
</dbReference>
<dbReference type="InterPro" id="IPR020891">
    <property type="entry name" value="UPF0758_CS"/>
</dbReference>
<dbReference type="NCBIfam" id="NF000642">
    <property type="entry name" value="PRK00024.1"/>
    <property type="match status" value="1"/>
</dbReference>
<dbReference type="NCBIfam" id="TIGR00608">
    <property type="entry name" value="radc"/>
    <property type="match status" value="1"/>
</dbReference>
<dbReference type="PANTHER" id="PTHR30471">
    <property type="entry name" value="DNA REPAIR PROTEIN RADC"/>
    <property type="match status" value="1"/>
</dbReference>
<dbReference type="PANTHER" id="PTHR30471:SF3">
    <property type="entry name" value="UPF0758 PROTEIN YEES-RELATED"/>
    <property type="match status" value="1"/>
</dbReference>
<dbReference type="Pfam" id="PF04002">
    <property type="entry name" value="RadC"/>
    <property type="match status" value="1"/>
</dbReference>
<dbReference type="SUPFAM" id="SSF102712">
    <property type="entry name" value="JAB1/MPN domain"/>
    <property type="match status" value="1"/>
</dbReference>
<dbReference type="SUPFAM" id="SSF47781">
    <property type="entry name" value="RuvA domain 2-like"/>
    <property type="match status" value="1"/>
</dbReference>
<dbReference type="PROSITE" id="PS50249">
    <property type="entry name" value="MPN"/>
    <property type="match status" value="1"/>
</dbReference>
<dbReference type="PROSITE" id="PS01302">
    <property type="entry name" value="UPF0758"/>
    <property type="match status" value="1"/>
</dbReference>
<gene>
    <name type="ordered locus">Oant_1909</name>
</gene>
<keyword id="KW-0378">Hydrolase</keyword>
<keyword id="KW-0479">Metal-binding</keyword>
<keyword id="KW-0482">Metalloprotease</keyword>
<keyword id="KW-0645">Protease</keyword>
<keyword id="KW-1185">Reference proteome</keyword>
<keyword id="KW-0862">Zinc</keyword>
<evidence type="ECO:0000255" key="1">
    <source>
        <dbReference type="PROSITE-ProRule" id="PRU01182"/>
    </source>
</evidence>
<evidence type="ECO:0000305" key="2"/>
<sequence length="249" mass="27650">MAKSRNEPGNIELPGFSDTLQLTPKIDKPHYAGHRDRLKQRFRDTPDALADYELLEMLLFRAIRRADTKPLAKALLMRFGSIAEVLAAPEKLIAEVPGAGPTVAHELKLVEAVAKRSARSTVMEREVLGSWNKVIEYCTAAMAYETREQFRILFLDKKNKLIADEVQQTGTVDHTPVYPREVVKRALELSATAIILVHNHPSGDPTPSRADIDMTKQLVNAAKALNITVHDHVIVGKHGHASFRGLGLI</sequence>
<name>Y1909_BRUA4</name>
<proteinExistence type="inferred from homology"/>
<accession>A6X071</accession>